<comment type="function">
    <text evidence="1">Catalyzes the base-exchange of a guanine (G) residue with the queuine precursor 7-aminomethyl-7-deazaguanine (PreQ1) at position 34 (anticodon wobble position) in tRNAs with GU(N) anticodons (tRNA-Asp, -Asn, -His and -Tyr). Catalysis occurs through a double-displacement mechanism. The nucleophile active site attacks the C1' of nucleotide 34 to detach the guanine base from the RNA, forming a covalent enzyme-RNA intermediate. The proton acceptor active site deprotonates the incoming PreQ1, allowing a nucleophilic attack on the C1' of the ribose to form the product. After dissociation, two additional enzymatic reactions on the tRNA convert PreQ1 to queuine (Q), resulting in the hypermodified nucleoside queuosine (7-(((4,5-cis-dihydroxy-2-cyclopenten-1-yl)amino)methyl)-7-deazaguanosine).</text>
</comment>
<comment type="catalytic activity">
    <reaction evidence="1">
        <text>7-aminomethyl-7-carbaguanine + guanosine(34) in tRNA = 7-aminomethyl-7-carbaguanosine(34) in tRNA + guanine</text>
        <dbReference type="Rhea" id="RHEA:24104"/>
        <dbReference type="Rhea" id="RHEA-COMP:10341"/>
        <dbReference type="Rhea" id="RHEA-COMP:10342"/>
        <dbReference type="ChEBI" id="CHEBI:16235"/>
        <dbReference type="ChEBI" id="CHEBI:58703"/>
        <dbReference type="ChEBI" id="CHEBI:74269"/>
        <dbReference type="ChEBI" id="CHEBI:82833"/>
        <dbReference type="EC" id="2.4.2.29"/>
    </reaction>
</comment>
<comment type="cofactor">
    <cofactor evidence="1">
        <name>Zn(2+)</name>
        <dbReference type="ChEBI" id="CHEBI:29105"/>
    </cofactor>
    <text evidence="1">Binds 1 zinc ion per subunit.</text>
</comment>
<comment type="pathway">
    <text evidence="1">tRNA modification; tRNA-queuosine biosynthesis.</text>
</comment>
<comment type="subunit">
    <text evidence="1">Homodimer. Within each dimer, one monomer is responsible for RNA recognition and catalysis, while the other monomer binds to the replacement base PreQ1.</text>
</comment>
<comment type="similarity">
    <text evidence="1">Belongs to the queuine tRNA-ribosyltransferase family.</text>
</comment>
<sequence>MSKFSFNINHQYKKARSGIITTAHGNIRTPAFMPVGTRGTVKAMLPESVAETGADILLGNTYHLMLQPSAERIAKLGGLHKFMNWGKPILTDSGGFQVMSLSKLRKITEEGVSFNSHINGDKYLLTPERSTEIQHLLGSTITMAFDECTPYPATFEEAKTSMQLTTRWAHRSREAFVKRDGYAQFGIIQGSTYEELREQSAKDLIELDFEGYAIGGLAVGEGQELMFKVLAPDFLPQNKPRYLMGVGKPADIIGAVSRGVDMFDCVIPTRSGRNGQAFTKYGTVNIRNSKYAEDNDPLEADCLCPACQNYSKAYLHHLVRIGEILGAMLMTWHNLTYFQNLMSRIREYIALGKDFDFTT</sequence>
<proteinExistence type="inferred from homology"/>
<dbReference type="EC" id="2.4.2.29" evidence="1"/>
<dbReference type="EMBL" id="CP000087">
    <property type="protein sequence ID" value="ABE05339.1"/>
    <property type="molecule type" value="Genomic_DNA"/>
</dbReference>
<dbReference type="RefSeq" id="WP_011477911.1">
    <property type="nucleotide sequence ID" value="NC_007940.1"/>
</dbReference>
<dbReference type="SMR" id="Q1RH25"/>
<dbReference type="KEGG" id="rbe:RBE_1258"/>
<dbReference type="eggNOG" id="COG0343">
    <property type="taxonomic scope" value="Bacteria"/>
</dbReference>
<dbReference type="HOGENOM" id="CLU_022060_0_1_5"/>
<dbReference type="OrthoDB" id="9805417at2"/>
<dbReference type="UniPathway" id="UPA00392"/>
<dbReference type="Proteomes" id="UP000001951">
    <property type="component" value="Chromosome"/>
</dbReference>
<dbReference type="GO" id="GO:0005737">
    <property type="term" value="C:cytoplasm"/>
    <property type="evidence" value="ECO:0007669"/>
    <property type="project" value="TreeGrafter"/>
</dbReference>
<dbReference type="GO" id="GO:0046872">
    <property type="term" value="F:metal ion binding"/>
    <property type="evidence" value="ECO:0007669"/>
    <property type="project" value="UniProtKB-KW"/>
</dbReference>
<dbReference type="GO" id="GO:0008479">
    <property type="term" value="F:tRNA-guanosine(34) queuine transglycosylase activity"/>
    <property type="evidence" value="ECO:0007669"/>
    <property type="project" value="UniProtKB-UniRule"/>
</dbReference>
<dbReference type="GO" id="GO:0008616">
    <property type="term" value="P:queuosine biosynthetic process"/>
    <property type="evidence" value="ECO:0007669"/>
    <property type="project" value="UniProtKB-UniRule"/>
</dbReference>
<dbReference type="GO" id="GO:0002099">
    <property type="term" value="P:tRNA wobble guanine modification"/>
    <property type="evidence" value="ECO:0007669"/>
    <property type="project" value="TreeGrafter"/>
</dbReference>
<dbReference type="GO" id="GO:0101030">
    <property type="term" value="P:tRNA-guanine transglycosylation"/>
    <property type="evidence" value="ECO:0007669"/>
    <property type="project" value="InterPro"/>
</dbReference>
<dbReference type="FunFam" id="3.20.20.105:FF:000001">
    <property type="entry name" value="Queuine tRNA-ribosyltransferase"/>
    <property type="match status" value="1"/>
</dbReference>
<dbReference type="Gene3D" id="3.20.20.105">
    <property type="entry name" value="Queuine tRNA-ribosyltransferase-like"/>
    <property type="match status" value="1"/>
</dbReference>
<dbReference type="HAMAP" id="MF_00168">
    <property type="entry name" value="Q_tRNA_Tgt"/>
    <property type="match status" value="1"/>
</dbReference>
<dbReference type="InterPro" id="IPR050076">
    <property type="entry name" value="ArchSynthase1/Queuine_TRR"/>
</dbReference>
<dbReference type="InterPro" id="IPR004803">
    <property type="entry name" value="TGT"/>
</dbReference>
<dbReference type="InterPro" id="IPR036511">
    <property type="entry name" value="TGT-like_sf"/>
</dbReference>
<dbReference type="InterPro" id="IPR002616">
    <property type="entry name" value="tRNA_ribo_trans-like"/>
</dbReference>
<dbReference type="NCBIfam" id="TIGR00430">
    <property type="entry name" value="Q_tRNA_tgt"/>
    <property type="match status" value="1"/>
</dbReference>
<dbReference type="NCBIfam" id="TIGR00449">
    <property type="entry name" value="tgt_general"/>
    <property type="match status" value="1"/>
</dbReference>
<dbReference type="PANTHER" id="PTHR46499">
    <property type="entry name" value="QUEUINE TRNA-RIBOSYLTRANSFERASE"/>
    <property type="match status" value="1"/>
</dbReference>
<dbReference type="PANTHER" id="PTHR46499:SF1">
    <property type="entry name" value="QUEUINE TRNA-RIBOSYLTRANSFERASE"/>
    <property type="match status" value="1"/>
</dbReference>
<dbReference type="Pfam" id="PF01702">
    <property type="entry name" value="TGT"/>
    <property type="match status" value="1"/>
</dbReference>
<dbReference type="SUPFAM" id="SSF51713">
    <property type="entry name" value="tRNA-guanine transglycosylase"/>
    <property type="match status" value="1"/>
</dbReference>
<accession>Q1RH25</accession>
<keyword id="KW-0328">Glycosyltransferase</keyword>
<keyword id="KW-0479">Metal-binding</keyword>
<keyword id="KW-0671">Queuosine biosynthesis</keyword>
<keyword id="KW-0808">Transferase</keyword>
<keyword id="KW-0819">tRNA processing</keyword>
<keyword id="KW-0862">Zinc</keyword>
<organism>
    <name type="scientific">Rickettsia bellii (strain RML369-C)</name>
    <dbReference type="NCBI Taxonomy" id="336407"/>
    <lineage>
        <taxon>Bacteria</taxon>
        <taxon>Pseudomonadati</taxon>
        <taxon>Pseudomonadota</taxon>
        <taxon>Alphaproteobacteria</taxon>
        <taxon>Rickettsiales</taxon>
        <taxon>Rickettsiaceae</taxon>
        <taxon>Rickettsieae</taxon>
        <taxon>Rickettsia</taxon>
        <taxon>belli group</taxon>
    </lineage>
</organism>
<name>TGT_RICBR</name>
<gene>
    <name evidence="1" type="primary">tgt</name>
    <name type="ordered locus">RBE_1258</name>
</gene>
<feature type="chain" id="PRO_0000278057" description="Queuine tRNA-ribosyltransferase">
    <location>
        <begin position="1"/>
        <end position="359"/>
    </location>
</feature>
<feature type="region of interest" description="RNA binding" evidence="1">
    <location>
        <begin position="245"/>
        <end position="251"/>
    </location>
</feature>
<feature type="region of interest" description="RNA binding; important for wobble base 34 recognition" evidence="1">
    <location>
        <begin position="269"/>
        <end position="273"/>
    </location>
</feature>
<feature type="active site" description="Proton acceptor" evidence="1">
    <location>
        <position position="92"/>
    </location>
</feature>
<feature type="active site" description="Nucleophile" evidence="1">
    <location>
        <position position="264"/>
    </location>
</feature>
<feature type="binding site" evidence="1">
    <location>
        <begin position="92"/>
        <end position="96"/>
    </location>
    <ligand>
        <name>substrate</name>
    </ligand>
</feature>
<feature type="binding site" evidence="1">
    <location>
        <position position="146"/>
    </location>
    <ligand>
        <name>substrate</name>
    </ligand>
</feature>
<feature type="binding site" evidence="1">
    <location>
        <position position="189"/>
    </location>
    <ligand>
        <name>substrate</name>
    </ligand>
</feature>
<feature type="binding site" evidence="1">
    <location>
        <position position="216"/>
    </location>
    <ligand>
        <name>substrate</name>
    </ligand>
</feature>
<feature type="binding site" evidence="1">
    <location>
        <position position="302"/>
    </location>
    <ligand>
        <name>Zn(2+)</name>
        <dbReference type="ChEBI" id="CHEBI:29105"/>
    </ligand>
</feature>
<feature type="binding site" evidence="1">
    <location>
        <position position="304"/>
    </location>
    <ligand>
        <name>Zn(2+)</name>
        <dbReference type="ChEBI" id="CHEBI:29105"/>
    </ligand>
</feature>
<feature type="binding site" evidence="1">
    <location>
        <position position="307"/>
    </location>
    <ligand>
        <name>Zn(2+)</name>
        <dbReference type="ChEBI" id="CHEBI:29105"/>
    </ligand>
</feature>
<feature type="binding site" evidence="1">
    <location>
        <position position="333"/>
    </location>
    <ligand>
        <name>Zn(2+)</name>
        <dbReference type="ChEBI" id="CHEBI:29105"/>
    </ligand>
</feature>
<protein>
    <recommendedName>
        <fullName evidence="1">Queuine tRNA-ribosyltransferase</fullName>
        <ecNumber evidence="1">2.4.2.29</ecNumber>
    </recommendedName>
    <alternativeName>
        <fullName evidence="1">Guanine insertion enzyme</fullName>
    </alternativeName>
    <alternativeName>
        <fullName evidence="1">tRNA-guanine transglycosylase</fullName>
    </alternativeName>
</protein>
<evidence type="ECO:0000255" key="1">
    <source>
        <dbReference type="HAMAP-Rule" id="MF_00168"/>
    </source>
</evidence>
<reference key="1">
    <citation type="journal article" date="2006" name="PLoS Genet.">
        <title>Genome sequence of Rickettsia bellii illuminates the role of amoebae in gene exchanges between intracellular pathogens.</title>
        <authorList>
            <person name="Ogata H."/>
            <person name="La Scola B."/>
            <person name="Audic S."/>
            <person name="Renesto P."/>
            <person name="Blanc G."/>
            <person name="Robert C."/>
            <person name="Fournier P.-E."/>
            <person name="Claverie J.-M."/>
            <person name="Raoult D."/>
        </authorList>
    </citation>
    <scope>NUCLEOTIDE SEQUENCE [LARGE SCALE GENOMIC DNA]</scope>
    <source>
        <strain>RML369-C</strain>
    </source>
</reference>